<protein>
    <recommendedName>
        <fullName>Dihydrolipoyl dehydrogenase, mitochondrial</fullName>
        <ecNumber evidence="2">1.8.1.4</ecNumber>
    </recommendedName>
    <alternativeName>
        <fullName>Dihydrolipoamide dehydrogenase</fullName>
    </alternativeName>
</protein>
<sequence>MQSWSRVYCSLVKRGHFSRISHGLQGVSVVPLRTYADQPIDADVTVIGSGPGGYVAAIKAAQLGFKTVCVEKNETLGGTCLNVGCIPSKALLNNSHFYHLAHGKDFASRGIEMSEVRLNLEKMMEQKSNAVKALTGGIAHLFKQNKVVHVNGYGKITGKNQVTATKADGSTQVIDTKNILIATGSEVTPFPGITIDEDTIVSSTGALSLKKVPEKLVVIGAGVIGVELGSVWQRLGADVTAVEFLGHVGGVGIDMEISKNFQRILQKQGFKFKLNTKVTGATKKSDGKIDVSIEAASGGKAEVITCDVLLVCIGRRPFTQNLGLEELGIELDTRGRIPVNTRFQTKIPNIYAIGDVVAGPMLAHKAEDEGIICVEGMAGGAVHIDYNCVPSVIYTHPEVAWVGKSEEQLKEEGIEYKVGKFPFAANSRAKTNADTDGMVKILGQKSTDRVLGAHILGPGAGEMVNEAALALEYGASCEDIARVCHAHPTLSEAFREANLAASFGKSINF</sequence>
<gene>
    <name type="primary">DLD</name>
</gene>
<dbReference type="EC" id="1.8.1.4" evidence="2"/>
<dbReference type="EMBL" id="NKLS02000004">
    <property type="status" value="NOT_ANNOTATED_CDS"/>
    <property type="molecule type" value="Genomic_DNA"/>
</dbReference>
<dbReference type="RefSeq" id="NP_001193099.1">
    <property type="nucleotide sequence ID" value="NM_001206170.3"/>
</dbReference>
<dbReference type="SMR" id="F1N206"/>
<dbReference type="CORUM" id="F1N206"/>
<dbReference type="FunCoup" id="F1N206">
    <property type="interactions" value="2124"/>
</dbReference>
<dbReference type="IntAct" id="F1N206">
    <property type="interactions" value="1"/>
</dbReference>
<dbReference type="STRING" id="9913.ENSBTAP00000033696"/>
<dbReference type="PaxDb" id="9913-ENSBTAP00000033696"/>
<dbReference type="Ensembl" id="ENSBTAT00000033787.6">
    <property type="protein sequence ID" value="ENSBTAP00000033696.4"/>
    <property type="gene ID" value="ENSBTAG00000001908.7"/>
</dbReference>
<dbReference type="GeneID" id="533910"/>
<dbReference type="KEGG" id="bta:533910"/>
<dbReference type="CTD" id="1738"/>
<dbReference type="VEuPathDB" id="HostDB:ENSBTAG00000001908"/>
<dbReference type="VGNC" id="VGNC:28085">
    <property type="gene designation" value="DLD"/>
</dbReference>
<dbReference type="eggNOG" id="KOG1335">
    <property type="taxonomic scope" value="Eukaryota"/>
</dbReference>
<dbReference type="GeneTree" id="ENSGT00550000074844"/>
<dbReference type="HOGENOM" id="CLU_016755_0_1_1"/>
<dbReference type="InParanoid" id="F1N206"/>
<dbReference type="OMA" id="CAQLGMK"/>
<dbReference type="OrthoDB" id="361797at2759"/>
<dbReference type="TreeFam" id="TF300414"/>
<dbReference type="Reactome" id="R-BTA-204174">
    <property type="pathway name" value="Regulation of pyruvate dehydrogenase (PDH) complex"/>
</dbReference>
<dbReference type="Reactome" id="R-BTA-5362517">
    <property type="pathway name" value="Signaling by Retinoic Acid"/>
</dbReference>
<dbReference type="Reactome" id="R-BTA-6783984">
    <property type="pathway name" value="Glycine degradation"/>
</dbReference>
<dbReference type="Reactome" id="R-BTA-70895">
    <property type="pathway name" value="Branched-chain amino acid catabolism"/>
</dbReference>
<dbReference type="Reactome" id="R-BTA-9837999">
    <property type="pathway name" value="Mitochondrial protein degradation"/>
</dbReference>
<dbReference type="Reactome" id="R-BTA-9853506">
    <property type="pathway name" value="OGDH complex synthesizes succinyl-CoA from 2-OG"/>
</dbReference>
<dbReference type="Reactome" id="R-BTA-9858328">
    <property type="pathway name" value="OADH complex synthesizes glutaryl-CoA from 2-OA"/>
</dbReference>
<dbReference type="Reactome" id="R-BTA-9859138">
    <property type="pathway name" value="BCKDH synthesizes BCAA-CoA from KIC, KMVA, KIV"/>
</dbReference>
<dbReference type="Reactome" id="R-BTA-9861559">
    <property type="pathway name" value="PDH complex synthesizes acetyl-CoA from PYR"/>
</dbReference>
<dbReference type="SABIO-RK" id="F1N206"/>
<dbReference type="Proteomes" id="UP000009136">
    <property type="component" value="Chromosome 4"/>
</dbReference>
<dbReference type="Bgee" id="ENSBTAG00000001908">
    <property type="expression patterns" value="Expressed in infraspinatus muscle and 105 other cell types or tissues"/>
</dbReference>
<dbReference type="GO" id="GO:1902493">
    <property type="term" value="C:acetyltransferase complex"/>
    <property type="evidence" value="ECO:0007669"/>
    <property type="project" value="Ensembl"/>
</dbReference>
<dbReference type="GO" id="GO:0043159">
    <property type="term" value="C:acrosomal matrix"/>
    <property type="evidence" value="ECO:0007669"/>
    <property type="project" value="Ensembl"/>
</dbReference>
<dbReference type="GO" id="GO:0160157">
    <property type="term" value="C:branched-chain alpha-ketoacid dehydrogenase complex"/>
    <property type="evidence" value="ECO:0007669"/>
    <property type="project" value="Ensembl"/>
</dbReference>
<dbReference type="GO" id="GO:0005759">
    <property type="term" value="C:mitochondrial matrix"/>
    <property type="evidence" value="ECO:0007669"/>
    <property type="project" value="UniProtKB-SubCell"/>
</dbReference>
<dbReference type="GO" id="GO:0005739">
    <property type="term" value="C:mitochondrion"/>
    <property type="evidence" value="ECO:0000318"/>
    <property type="project" value="GO_Central"/>
</dbReference>
<dbReference type="GO" id="GO:0031514">
    <property type="term" value="C:motile cilium"/>
    <property type="evidence" value="ECO:0007669"/>
    <property type="project" value="UniProtKB-SubCell"/>
</dbReference>
<dbReference type="GO" id="GO:0005634">
    <property type="term" value="C:nucleus"/>
    <property type="evidence" value="ECO:0007669"/>
    <property type="project" value="UniProtKB-SubCell"/>
</dbReference>
<dbReference type="GO" id="GO:0160167">
    <property type="term" value="C:oxoadipate dehydrogenase complex"/>
    <property type="evidence" value="ECO:0007669"/>
    <property type="project" value="Ensembl"/>
</dbReference>
<dbReference type="GO" id="GO:0045252">
    <property type="term" value="C:oxoglutarate dehydrogenase complex"/>
    <property type="evidence" value="ECO:0000318"/>
    <property type="project" value="GO_Central"/>
</dbReference>
<dbReference type="GO" id="GO:0045254">
    <property type="term" value="C:pyruvate dehydrogenase complex"/>
    <property type="evidence" value="ECO:0007669"/>
    <property type="project" value="Ensembl"/>
</dbReference>
<dbReference type="GO" id="GO:0047101">
    <property type="term" value="F:branched-chain alpha-keto acid dehydrogenase activity"/>
    <property type="evidence" value="ECO:0007669"/>
    <property type="project" value="Ensembl"/>
</dbReference>
<dbReference type="GO" id="GO:0004148">
    <property type="term" value="F:dihydrolipoyl dehydrogenase (NADH) activity"/>
    <property type="evidence" value="ECO:0000318"/>
    <property type="project" value="GO_Central"/>
</dbReference>
<dbReference type="GO" id="GO:0050660">
    <property type="term" value="F:flavin adenine dinucleotide binding"/>
    <property type="evidence" value="ECO:0000318"/>
    <property type="project" value="GO_Central"/>
</dbReference>
<dbReference type="GO" id="GO:0034604">
    <property type="term" value="F:pyruvate dehydrogenase (NAD+) activity"/>
    <property type="evidence" value="ECO:0007669"/>
    <property type="project" value="Ensembl"/>
</dbReference>
<dbReference type="GO" id="GO:0006103">
    <property type="term" value="P:2-oxoglutarate metabolic process"/>
    <property type="evidence" value="ECO:0000318"/>
    <property type="project" value="GO_Central"/>
</dbReference>
<dbReference type="GO" id="GO:0009083">
    <property type="term" value="P:branched-chain amino acid catabolic process"/>
    <property type="evidence" value="ECO:0007669"/>
    <property type="project" value="Ensembl"/>
</dbReference>
<dbReference type="GO" id="GO:0007369">
    <property type="term" value="P:gastrulation"/>
    <property type="evidence" value="ECO:0007669"/>
    <property type="project" value="Ensembl"/>
</dbReference>
<dbReference type="GO" id="GO:0006120">
    <property type="term" value="P:mitochondrial electron transport, NADH to ubiquinone"/>
    <property type="evidence" value="ECO:0007669"/>
    <property type="project" value="Ensembl"/>
</dbReference>
<dbReference type="GO" id="GO:0006508">
    <property type="term" value="P:proteolysis"/>
    <property type="evidence" value="ECO:0007669"/>
    <property type="project" value="Ensembl"/>
</dbReference>
<dbReference type="GO" id="GO:0006090">
    <property type="term" value="P:pyruvate metabolic process"/>
    <property type="evidence" value="ECO:0000318"/>
    <property type="project" value="GO_Central"/>
</dbReference>
<dbReference type="GO" id="GO:0042391">
    <property type="term" value="P:regulation of membrane potential"/>
    <property type="evidence" value="ECO:0007669"/>
    <property type="project" value="Ensembl"/>
</dbReference>
<dbReference type="GO" id="GO:0048240">
    <property type="term" value="P:sperm capacitation"/>
    <property type="evidence" value="ECO:0007669"/>
    <property type="project" value="Ensembl"/>
</dbReference>
<dbReference type="FunFam" id="3.30.390.30:FF:000001">
    <property type="entry name" value="Dihydrolipoyl dehydrogenase"/>
    <property type="match status" value="1"/>
</dbReference>
<dbReference type="FunFam" id="3.50.50.60:FF:000025">
    <property type="entry name" value="Dihydrolipoyl dehydrogenase"/>
    <property type="match status" value="1"/>
</dbReference>
<dbReference type="FunFam" id="3.50.50.60:FF:000221">
    <property type="entry name" value="Dihydrolipoyl dehydrogenase, mitochondrial"/>
    <property type="match status" value="1"/>
</dbReference>
<dbReference type="Gene3D" id="3.30.390.30">
    <property type="match status" value="1"/>
</dbReference>
<dbReference type="Gene3D" id="3.50.50.60">
    <property type="entry name" value="FAD/NAD(P)-binding domain"/>
    <property type="match status" value="2"/>
</dbReference>
<dbReference type="InterPro" id="IPR050151">
    <property type="entry name" value="Class-I_Pyr_Nuc-Dis_Oxidored"/>
</dbReference>
<dbReference type="InterPro" id="IPR036188">
    <property type="entry name" value="FAD/NAD-bd_sf"/>
</dbReference>
<dbReference type="InterPro" id="IPR023753">
    <property type="entry name" value="FAD/NAD-binding_dom"/>
</dbReference>
<dbReference type="InterPro" id="IPR016156">
    <property type="entry name" value="FAD/NAD-linked_Rdtase_dimer_sf"/>
</dbReference>
<dbReference type="InterPro" id="IPR006258">
    <property type="entry name" value="Lipoamide_DH"/>
</dbReference>
<dbReference type="InterPro" id="IPR001100">
    <property type="entry name" value="Pyr_nuc-diS_OxRdtase"/>
</dbReference>
<dbReference type="InterPro" id="IPR004099">
    <property type="entry name" value="Pyr_nucl-diS_OxRdtase_dimer"/>
</dbReference>
<dbReference type="InterPro" id="IPR012999">
    <property type="entry name" value="Pyr_OxRdtase_I_AS"/>
</dbReference>
<dbReference type="NCBIfam" id="TIGR01350">
    <property type="entry name" value="lipoamide_DH"/>
    <property type="match status" value="1"/>
</dbReference>
<dbReference type="PANTHER" id="PTHR22912:SF151">
    <property type="entry name" value="DIHYDROLIPOYL DEHYDROGENASE, MITOCHONDRIAL"/>
    <property type="match status" value="1"/>
</dbReference>
<dbReference type="PANTHER" id="PTHR22912">
    <property type="entry name" value="DISULFIDE OXIDOREDUCTASE"/>
    <property type="match status" value="1"/>
</dbReference>
<dbReference type="Pfam" id="PF07992">
    <property type="entry name" value="Pyr_redox_2"/>
    <property type="match status" value="1"/>
</dbReference>
<dbReference type="Pfam" id="PF02852">
    <property type="entry name" value="Pyr_redox_dim"/>
    <property type="match status" value="1"/>
</dbReference>
<dbReference type="PIRSF" id="PIRSF000350">
    <property type="entry name" value="Mercury_reductase_MerA"/>
    <property type="match status" value="1"/>
</dbReference>
<dbReference type="PRINTS" id="PR00368">
    <property type="entry name" value="FADPNR"/>
</dbReference>
<dbReference type="PRINTS" id="PR00411">
    <property type="entry name" value="PNDRDTASEI"/>
</dbReference>
<dbReference type="SUPFAM" id="SSF51905">
    <property type="entry name" value="FAD/NAD(P)-binding domain"/>
    <property type="match status" value="1"/>
</dbReference>
<dbReference type="SUPFAM" id="SSF55424">
    <property type="entry name" value="FAD/NAD-linked reductases, dimerisation (C-terminal) domain"/>
    <property type="match status" value="1"/>
</dbReference>
<dbReference type="PROSITE" id="PS00076">
    <property type="entry name" value="PYRIDINE_REDOX_1"/>
    <property type="match status" value="1"/>
</dbReference>
<evidence type="ECO:0000250" key="1">
    <source>
        <dbReference type="UniProtKB" id="O08749"/>
    </source>
</evidence>
<evidence type="ECO:0000250" key="2">
    <source>
        <dbReference type="UniProtKB" id="P09622"/>
    </source>
</evidence>
<evidence type="ECO:0000250" key="3">
    <source>
        <dbReference type="UniProtKB" id="P09624"/>
    </source>
</evidence>
<evidence type="ECO:0000250" key="4">
    <source>
        <dbReference type="UniProtKB" id="Q6P6R2"/>
    </source>
</evidence>
<evidence type="ECO:0000250" key="5">
    <source>
        <dbReference type="UniProtKB" id="Q811C4"/>
    </source>
</evidence>
<evidence type="ECO:0000269" key="6">
    <source>
    </source>
</evidence>
<evidence type="ECO:0000305" key="7"/>
<evidence type="ECO:0000305" key="8">
    <source>
    </source>
</evidence>
<accession>F1N206</accession>
<name>DLDH_BOVIN</name>
<feature type="transit peptide" description="Mitochondrion" evidence="2">
    <location>
        <begin position="1"/>
        <end position="35"/>
    </location>
</feature>
<feature type="chain" id="PRO_0000459621" description="Dihydrolipoyl dehydrogenase, mitochondrial" evidence="1">
    <location>
        <begin position="36"/>
        <end position="509"/>
    </location>
</feature>
<feature type="active site" description="Proton acceptor" evidence="3">
    <location>
        <position position="487"/>
    </location>
</feature>
<feature type="binding site" evidence="2">
    <location>
        <begin position="71"/>
        <end position="80"/>
    </location>
    <ligand>
        <name>FAD</name>
        <dbReference type="ChEBI" id="CHEBI:57692"/>
    </ligand>
</feature>
<feature type="binding site" evidence="2">
    <location>
        <position position="89"/>
    </location>
    <ligand>
        <name>FAD</name>
        <dbReference type="ChEBI" id="CHEBI:57692"/>
    </ligand>
</feature>
<feature type="binding site" evidence="2">
    <location>
        <position position="154"/>
    </location>
    <ligand>
        <name>FAD</name>
        <dbReference type="ChEBI" id="CHEBI:57692"/>
    </ligand>
</feature>
<feature type="binding site" evidence="2">
    <location>
        <begin position="183"/>
        <end position="185"/>
    </location>
    <ligand>
        <name>FAD</name>
        <dbReference type="ChEBI" id="CHEBI:57692"/>
    </ligand>
</feature>
<feature type="binding site" evidence="2">
    <location>
        <begin position="220"/>
        <end position="227"/>
    </location>
    <ligand>
        <name>NAD(+)</name>
        <dbReference type="ChEBI" id="CHEBI:57540"/>
    </ligand>
</feature>
<feature type="binding site" evidence="2">
    <location>
        <position position="243"/>
    </location>
    <ligand>
        <name>NAD(+)</name>
        <dbReference type="ChEBI" id="CHEBI:57540"/>
    </ligand>
</feature>
<feature type="binding site" evidence="2">
    <location>
        <position position="278"/>
    </location>
    <ligand>
        <name>NAD(+)</name>
        <dbReference type="ChEBI" id="CHEBI:57540"/>
    </ligand>
</feature>
<feature type="binding site" evidence="2">
    <location>
        <position position="314"/>
    </location>
    <ligand>
        <name>NAD(+)</name>
        <dbReference type="ChEBI" id="CHEBI:57540"/>
    </ligand>
</feature>
<feature type="binding site" evidence="2">
    <location>
        <position position="355"/>
    </location>
    <ligand>
        <name>FAD</name>
        <dbReference type="ChEBI" id="CHEBI:57692"/>
    </ligand>
</feature>
<feature type="binding site" evidence="2">
    <location>
        <begin position="361"/>
        <end position="364"/>
    </location>
    <ligand>
        <name>FAD</name>
        <dbReference type="ChEBI" id="CHEBI:57692"/>
    </ligand>
</feature>
<feature type="site" description="Important for interaction with PDHX and activity of pyruvate dehydrogenase complex" evidence="2">
    <location>
        <position position="448"/>
    </location>
</feature>
<feature type="site" description="Important for interaction with PDHX and activity of pyruvate dehydrogenase complex" evidence="2">
    <location>
        <position position="473"/>
    </location>
</feature>
<feature type="modified residue" description="N6-acetyllysine; alternate" evidence="1">
    <location>
        <position position="66"/>
    </location>
</feature>
<feature type="modified residue" description="N6-succinyllysine; alternate" evidence="1">
    <location>
        <position position="66"/>
    </location>
</feature>
<feature type="modified residue" description="N6-acetyllysine; alternate" evidence="1">
    <location>
        <position position="104"/>
    </location>
</feature>
<feature type="modified residue" description="N6-succinyllysine; alternate" evidence="1">
    <location>
        <position position="104"/>
    </location>
</feature>
<feature type="modified residue" description="N6-acetyllysine; alternate" evidence="1">
    <location>
        <position position="122"/>
    </location>
</feature>
<feature type="modified residue" description="N6-succinyllysine; alternate" evidence="1">
    <location>
        <position position="122"/>
    </location>
</feature>
<feature type="modified residue" description="N6-acetyllysine; alternate" evidence="1">
    <location>
        <position position="132"/>
    </location>
</feature>
<feature type="modified residue" description="N6-succinyllysine; alternate" evidence="1">
    <location>
        <position position="132"/>
    </location>
</feature>
<feature type="modified residue" description="N6-acetyllysine; alternate" evidence="1">
    <location>
        <position position="143"/>
    </location>
</feature>
<feature type="modified residue" description="N6-succinyllysine; alternate" evidence="1">
    <location>
        <position position="143"/>
    </location>
</feature>
<feature type="modified residue" description="N6-succinyllysine" evidence="1">
    <location>
        <position position="159"/>
    </location>
</feature>
<feature type="modified residue" description="N6-succinyllysine" evidence="1">
    <location>
        <position position="166"/>
    </location>
</feature>
<feature type="modified residue" description="N6-succinyllysine" evidence="1">
    <location>
        <position position="273"/>
    </location>
</feature>
<feature type="modified residue" description="N6-succinyllysine" evidence="1">
    <location>
        <position position="277"/>
    </location>
</feature>
<feature type="modified residue" description="Phosphoserine" evidence="1">
    <location>
        <position position="285"/>
    </location>
</feature>
<feature type="modified residue" description="Phosphoserine" evidence="4">
    <location>
        <position position="297"/>
    </location>
</feature>
<feature type="modified residue" description="N6-acetyllysine" evidence="1">
    <location>
        <position position="346"/>
    </location>
</feature>
<feature type="modified residue" description="N6-acetyllysine; alternate" evidence="1">
    <location>
        <position position="410"/>
    </location>
</feature>
<feature type="modified residue" description="N6-succinyllysine; alternate" evidence="1">
    <location>
        <position position="410"/>
    </location>
</feature>
<feature type="modified residue" description="N6-acetyllysine" evidence="2">
    <location>
        <position position="417"/>
    </location>
</feature>
<feature type="modified residue" description="N6-acetyllysine" evidence="1">
    <location>
        <position position="420"/>
    </location>
</feature>
<feature type="modified residue" description="N6-succinyllysine" evidence="1">
    <location>
        <position position="430"/>
    </location>
</feature>
<feature type="modified residue" description="N6-acetyllysine; alternate" evidence="1">
    <location>
        <position position="505"/>
    </location>
</feature>
<feature type="modified residue" description="N6-succinyllysine; alternate" evidence="1">
    <location>
        <position position="505"/>
    </location>
</feature>
<feature type="disulfide bond" description="Redox-active" evidence="3">
    <location>
        <begin position="80"/>
        <end position="85"/>
    </location>
</feature>
<proteinExistence type="evidence at protein level"/>
<keyword id="KW-0007">Acetylation</keyword>
<keyword id="KW-0966">Cell projection</keyword>
<keyword id="KW-0969">Cilium</keyword>
<keyword id="KW-0968">Cytoplasmic vesicle</keyword>
<keyword id="KW-1015">Disulfide bond</keyword>
<keyword id="KW-0274">FAD</keyword>
<keyword id="KW-0282">Flagellum</keyword>
<keyword id="KW-0285">Flavoprotein</keyword>
<keyword id="KW-0496">Mitochondrion</keyword>
<keyword id="KW-0520">NAD</keyword>
<keyword id="KW-0547">Nucleotide-binding</keyword>
<keyword id="KW-0539">Nucleus</keyword>
<keyword id="KW-0560">Oxidoreductase</keyword>
<keyword id="KW-0597">Phosphoprotein</keyword>
<keyword id="KW-0676">Redox-active center</keyword>
<keyword id="KW-1185">Reference proteome</keyword>
<keyword id="KW-0809">Transit peptide</keyword>
<comment type="function">
    <text evidence="1 2 5">Lipoamide dehydrogenase is a component of the glycine cleavage system as well as an E3 component of three alpha-ketoacid dehydrogenase complexes (pyruvate-, alpha-ketoglutarate-, and branched-chain amino acid-dehydrogenase complex) (By similarity). The 2-oxoglutarate dehydrogenase complex is mainly active in the mitochondrion (By similarity). A fraction of the 2-oxoglutarate dehydrogenase complex also localizes in the nucleus and is required for lysine succinylation of histones: associates with KAT2A on chromatin and provides succinyl-CoA to histone succinyltransferase KAT2A (By similarity). In monomeric form may have additional moonlighting function as serine protease (By similarity). Involved in the hyperactivation of spermatazoa during capacitation and in the spermatazoal acrosome reaction (By similarity).</text>
</comment>
<comment type="catalytic activity">
    <reaction evidence="2">
        <text>N(6)-[(R)-dihydrolipoyl]-L-lysyl-[protein] + NAD(+) = N(6)-[(R)-lipoyl]-L-lysyl-[protein] + NADH + H(+)</text>
        <dbReference type="Rhea" id="RHEA:15045"/>
        <dbReference type="Rhea" id="RHEA-COMP:10474"/>
        <dbReference type="Rhea" id="RHEA-COMP:10475"/>
        <dbReference type="ChEBI" id="CHEBI:15378"/>
        <dbReference type="ChEBI" id="CHEBI:57540"/>
        <dbReference type="ChEBI" id="CHEBI:57945"/>
        <dbReference type="ChEBI" id="CHEBI:83099"/>
        <dbReference type="ChEBI" id="CHEBI:83100"/>
        <dbReference type="EC" id="1.8.1.4"/>
    </reaction>
</comment>
<comment type="cofactor">
    <cofactor evidence="2">
        <name>FAD</name>
        <dbReference type="ChEBI" id="CHEBI:57692"/>
    </cofactor>
    <text evidence="2">Binds 1 FAD per subunit.</text>
</comment>
<comment type="subunit">
    <text evidence="1 2 6">Homodimer. Part of the multimeric pyruvate dehydrogenase complex that contains multiple copies of pyruvate dehydrogenase (subunits PDHA (PDHA1 or PDHA2) and PDHB, E1), dihydrolipoamide acetyltransferase (DLAT, E2) and lipoamide dehydrogenase (DLD, E3). These subunits are bound to an inner core composed of about 48 DLAT and 12 PDHX molecules (by non covalent bonds). The 2-oxoglutarate dehydrogenase complex is composed of OGDH (2-oxoglutarate dehydrogenase; E1), DLST (dihydrolipoamide succinyltransferase; E2), DLD (dihydrolipoamide dehydrogenase; E3) and the assembly factor KGD4 (PubMed:36854377). It contains multiple copies of the three enzymatic components (E1, E2 and E3). In the nucleus, the 2-oxoglutarate dehydrogenase complex associates with KAT2A. Interacts with PDHX (By similarity).</text>
</comment>
<comment type="subcellular location">
    <subcellularLocation>
        <location evidence="8">Mitochondrion matrix</location>
    </subcellularLocation>
    <subcellularLocation>
        <location evidence="2">Nucleus</location>
    </subcellularLocation>
    <subcellularLocation>
        <location evidence="5">Cell projection</location>
        <location evidence="5">Cilium</location>
        <location evidence="5">Flagellum</location>
    </subcellularLocation>
    <subcellularLocation>
        <location evidence="1">Cytoplasmic vesicle</location>
        <location evidence="1">Secretory vesicle</location>
        <location evidence="1">Acrosome</location>
    </subcellularLocation>
    <text evidence="2">Mainly localizes in the mitochondrion. A small fraction localizes to the nucleus, where the 2-oxoglutarate dehydrogenase complex is required for histone succinylation.</text>
</comment>
<comment type="PTM">
    <text evidence="5">Tyrosine phosphorylated.</text>
</comment>
<comment type="miscellaneous">
    <text evidence="3">The active site is a redox-active disulfide bond.</text>
</comment>
<comment type="similarity">
    <text evidence="7">Belongs to the class-I pyridine nucleotide-disulfide oxidoreductase family.</text>
</comment>
<reference key="1">
    <citation type="submission" date="2018-03" db="EMBL/GenBank/DDBJ databases">
        <title>ARS-UCD1.2.</title>
        <authorList>
            <person name="Rosen B.D."/>
            <person name="Bickhart D.M."/>
            <person name="Koren S."/>
            <person name="Schnabel R.D."/>
            <person name="Hall R."/>
            <person name="Zimin A."/>
            <person name="Dreischer C."/>
            <person name="Schultheiss S."/>
            <person name="Schroeder S.G."/>
            <person name="Elsik C.G."/>
            <person name="Couldrey C."/>
            <person name="Liu G.E."/>
            <person name="Van Tassell C.P."/>
            <person name="Phillippy A.M."/>
            <person name="Smith T.P.L."/>
            <person name="Medrano J.F."/>
        </authorList>
    </citation>
    <scope>NUCLEOTIDE SEQUENCE [LARGE SCALE GENOMIC DNA]</scope>
    <source>
        <strain>Hereford</strain>
    </source>
</reference>
<reference key="2">
    <citation type="journal article" date="2023" name="Open Biol.">
        <title>MRPS36 provides a structural link in the eukaryotic 2-oxoglutarate dehydrogenase complex.</title>
        <authorList>
            <person name="Hevler J.F."/>
            <person name="Albanese P."/>
            <person name="Cabrera-Orefice A."/>
            <person name="Potter A."/>
            <person name="Jankevics A."/>
            <person name="Misic J."/>
            <person name="Scheltema R.A."/>
            <person name="Brandt U."/>
            <person name="Arnold S."/>
            <person name="Heck A.J.R."/>
        </authorList>
    </citation>
    <scope>SUBCELLULAR LOCATION</scope>
    <scope>SUBUNIT</scope>
</reference>
<organism>
    <name type="scientific">Bos taurus</name>
    <name type="common">Bovine</name>
    <dbReference type="NCBI Taxonomy" id="9913"/>
    <lineage>
        <taxon>Eukaryota</taxon>
        <taxon>Metazoa</taxon>
        <taxon>Chordata</taxon>
        <taxon>Craniata</taxon>
        <taxon>Vertebrata</taxon>
        <taxon>Euteleostomi</taxon>
        <taxon>Mammalia</taxon>
        <taxon>Eutheria</taxon>
        <taxon>Laurasiatheria</taxon>
        <taxon>Artiodactyla</taxon>
        <taxon>Ruminantia</taxon>
        <taxon>Pecora</taxon>
        <taxon>Bovidae</taxon>
        <taxon>Bovinae</taxon>
        <taxon>Bos</taxon>
    </lineage>
</organism>